<evidence type="ECO:0000250" key="1"/>
<evidence type="ECO:0000255" key="2"/>
<evidence type="ECO:0000305" key="3"/>
<keyword id="KW-0044">Antibiotic</keyword>
<keyword id="KW-0929">Antimicrobial</keyword>
<keyword id="KW-0165">Cleavage on pair of basic residues</keyword>
<keyword id="KW-1015">Disulfide bond</keyword>
<keyword id="KW-0372">Hormone</keyword>
<keyword id="KW-1185">Reference proteome</keyword>
<keyword id="KW-0964">Secreted</keyword>
<keyword id="KW-0732">Signal</keyword>
<reference key="1">
    <citation type="journal article" date="2004" name="Dev. Comp. Immunol.">
        <title>Organization and expression analysis of the zebrafish hepcidin gene, an antimicrobial peptide gene conserved among vertebrates.</title>
        <authorList>
            <person name="Shike H."/>
            <person name="Shimizu C."/>
            <person name="Lauth X."/>
            <person name="Burns J.C."/>
        </authorList>
    </citation>
    <scope>NUCLEOTIDE SEQUENCE [GENOMIC DNA / MRNA]</scope>
</reference>
<gene>
    <name type="primary">hamp1</name>
</gene>
<organism>
    <name type="scientific">Danio rerio</name>
    <name type="common">Zebrafish</name>
    <name type="synonym">Brachydanio rerio</name>
    <dbReference type="NCBI Taxonomy" id="7955"/>
    <lineage>
        <taxon>Eukaryota</taxon>
        <taxon>Metazoa</taxon>
        <taxon>Chordata</taxon>
        <taxon>Craniata</taxon>
        <taxon>Vertebrata</taxon>
        <taxon>Euteleostomi</taxon>
        <taxon>Actinopterygii</taxon>
        <taxon>Neopterygii</taxon>
        <taxon>Teleostei</taxon>
        <taxon>Ostariophysi</taxon>
        <taxon>Cypriniformes</taxon>
        <taxon>Danionidae</taxon>
        <taxon>Danioninae</taxon>
        <taxon>Danio</taxon>
    </lineage>
</organism>
<sequence length="91" mass="10532">MKLSNVFLAAVVILTCVCVFQITAVPFIQQVQDEHHVESEELQENQHLTEAEHRQTDPLVLFRTKRQSHLSLCRFCCKCCRNKGCGYCCKF</sequence>
<accession>P61516</accession>
<name>HEPC1_DANRE</name>
<dbReference type="EMBL" id="AY363452">
    <property type="protein sequence ID" value="AAR18592.1"/>
    <property type="molecule type" value="Genomic_DNA"/>
</dbReference>
<dbReference type="EMBL" id="AY363454">
    <property type="protein sequence ID" value="AAR18594.1"/>
    <property type="molecule type" value="mRNA"/>
</dbReference>
<dbReference type="FunCoup" id="P61516">
    <property type="interactions" value="12"/>
</dbReference>
<dbReference type="AGR" id="ZFIN:ZDB-GENE-050726-1"/>
<dbReference type="ZFIN" id="ZDB-GENE-050726-1">
    <property type="gene designation" value="hamp"/>
</dbReference>
<dbReference type="InParanoid" id="P61516"/>
<dbReference type="Proteomes" id="UP000000437">
    <property type="component" value="Unplaced"/>
</dbReference>
<dbReference type="GO" id="GO:0005576">
    <property type="term" value="C:extracellular region"/>
    <property type="evidence" value="ECO:0007669"/>
    <property type="project" value="UniProtKB-SubCell"/>
</dbReference>
<dbReference type="GO" id="GO:0005179">
    <property type="term" value="F:hormone activity"/>
    <property type="evidence" value="ECO:0007669"/>
    <property type="project" value="UniProtKB-KW"/>
</dbReference>
<dbReference type="GO" id="GO:0001530">
    <property type="term" value="F:lipopolysaccharide binding"/>
    <property type="evidence" value="ECO:0000314"/>
    <property type="project" value="ZFIN"/>
</dbReference>
<dbReference type="GO" id="GO:0070891">
    <property type="term" value="F:lipoteichoic acid binding"/>
    <property type="evidence" value="ECO:0000314"/>
    <property type="project" value="ZFIN"/>
</dbReference>
<dbReference type="GO" id="GO:0042834">
    <property type="term" value="F:peptidoglycan binding"/>
    <property type="evidence" value="ECO:0000314"/>
    <property type="project" value="ZFIN"/>
</dbReference>
<dbReference type="GO" id="GO:0140367">
    <property type="term" value="P:antibacterial innate immune response"/>
    <property type="evidence" value="ECO:0000314"/>
    <property type="project" value="ZFIN"/>
</dbReference>
<dbReference type="GO" id="GO:0071393">
    <property type="term" value="P:cellular response to progesterone stimulus"/>
    <property type="evidence" value="ECO:0000315"/>
    <property type="project" value="ZFIN"/>
</dbReference>
<dbReference type="GO" id="GO:0071383">
    <property type="term" value="P:cellular response to steroid hormone stimulus"/>
    <property type="evidence" value="ECO:0000315"/>
    <property type="project" value="ZFIN"/>
</dbReference>
<dbReference type="GO" id="GO:0042742">
    <property type="term" value="P:defense response to bacterium"/>
    <property type="evidence" value="ECO:0000318"/>
    <property type="project" value="GO_Central"/>
</dbReference>
<dbReference type="GO" id="GO:0050829">
    <property type="term" value="P:defense response to Gram-negative bacterium"/>
    <property type="evidence" value="ECO:0000314"/>
    <property type="project" value="ZFIN"/>
</dbReference>
<dbReference type="GO" id="GO:0050830">
    <property type="term" value="P:defense response to Gram-positive bacterium"/>
    <property type="evidence" value="ECO:0000314"/>
    <property type="project" value="ZFIN"/>
</dbReference>
<dbReference type="GO" id="GO:0006879">
    <property type="term" value="P:intracellular iron ion homeostasis"/>
    <property type="evidence" value="ECO:0007669"/>
    <property type="project" value="InterPro"/>
</dbReference>
<dbReference type="GO" id="GO:0060586">
    <property type="term" value="P:multicellular organismal-level iron ion homeostasis"/>
    <property type="evidence" value="ECO:0000315"/>
    <property type="project" value="ZFIN"/>
</dbReference>
<dbReference type="GO" id="GO:0009617">
    <property type="term" value="P:response to bacterium"/>
    <property type="evidence" value="ECO:0000314"/>
    <property type="project" value="ZFIN"/>
</dbReference>
<dbReference type="InterPro" id="IPR010500">
    <property type="entry name" value="Hepcidin"/>
</dbReference>
<dbReference type="PANTHER" id="PTHR16877">
    <property type="entry name" value="HEPCIDIN"/>
    <property type="match status" value="1"/>
</dbReference>
<dbReference type="PANTHER" id="PTHR16877:SF0">
    <property type="entry name" value="HEPCIDIN"/>
    <property type="match status" value="1"/>
</dbReference>
<dbReference type="Pfam" id="PF06446">
    <property type="entry name" value="Hepcidin"/>
    <property type="match status" value="1"/>
</dbReference>
<protein>
    <recommendedName>
        <fullName>Hepcidin-1</fullName>
    </recommendedName>
</protein>
<proteinExistence type="inferred from homology"/>
<feature type="signal peptide" evidence="2">
    <location>
        <begin position="1"/>
        <end position="24"/>
    </location>
</feature>
<feature type="propeptide" id="PRO_0000013387" evidence="2">
    <location>
        <begin position="25"/>
        <end position="64"/>
    </location>
</feature>
<feature type="peptide" id="PRO_0000013388" description="Hepcidin-1">
    <location>
        <begin position="67"/>
        <end position="91"/>
    </location>
</feature>
<feature type="disulfide bond" evidence="1">
    <location>
        <begin position="73"/>
        <end position="89"/>
    </location>
</feature>
<feature type="disulfide bond" evidence="1">
    <location>
        <begin position="76"/>
        <end position="79"/>
    </location>
</feature>
<feature type="disulfide bond" evidence="1">
    <location>
        <begin position="77"/>
        <end position="85"/>
    </location>
</feature>
<feature type="disulfide bond" evidence="1">
    <location>
        <begin position="80"/>
        <end position="88"/>
    </location>
</feature>
<comment type="function">
    <text evidence="1">Seems to act as a signaling molecule involved in the maintenance of iron homeostasis. Seems to be required in conjunction with HFE to regulate both intestinal iron absorption and iron storage in macrophages. May also have antimicrobial activity (By similarity).</text>
</comment>
<comment type="subcellular location">
    <subcellularLocation>
        <location>Secreted</location>
    </subcellularLocation>
</comment>
<comment type="similarity">
    <text evidence="3">Belongs to the hepcidin family.</text>
</comment>